<name>BT1_ARATH</name>
<reference key="1">
    <citation type="journal article" date="2004" name="Plant Mol. Biol.">
        <title>A novel family of Ca2+/calmodulin-binding proteins involved in transcriptional regulation: interaction with fsh/Ring3 class transcription activators.</title>
        <authorList>
            <person name="Du L."/>
            <person name="Poovaiah B.W."/>
        </authorList>
    </citation>
    <scope>NUCLEOTIDE SEQUENCE [MRNA]</scope>
    <scope>GENE FAMILY</scope>
    <scope>NOMENCLATURE</scope>
    <scope>SUBCELLULAR LOCATION</scope>
    <scope>INTERACTION WITH GTE9 AND GTE11</scope>
    <scope>TISSUE SPECIFICITY</scope>
    <scope>INDUCTION</scope>
    <source>
        <strain>cv. Columbia</strain>
    </source>
</reference>
<reference key="2">
    <citation type="journal article" date="1997" name="DNA Res.">
        <title>Structural analysis of Arabidopsis thaliana chromosome 5. III. Sequence features of the regions of 1,191,918 bp covered by seventeen physically assigned P1 clones.</title>
        <authorList>
            <person name="Nakamura Y."/>
            <person name="Sato S."/>
            <person name="Kaneko T."/>
            <person name="Kotani H."/>
            <person name="Asamizu E."/>
            <person name="Miyajima N."/>
            <person name="Tabata S."/>
        </authorList>
    </citation>
    <scope>NUCLEOTIDE SEQUENCE [LARGE SCALE GENOMIC DNA]</scope>
    <source>
        <strain>cv. Columbia</strain>
    </source>
</reference>
<reference key="3">
    <citation type="journal article" date="2017" name="Plant J.">
        <title>Araport11: a complete reannotation of the Arabidopsis thaliana reference genome.</title>
        <authorList>
            <person name="Cheng C.Y."/>
            <person name="Krishnakumar V."/>
            <person name="Chan A.P."/>
            <person name="Thibaud-Nissen F."/>
            <person name="Schobel S."/>
            <person name="Town C.D."/>
        </authorList>
    </citation>
    <scope>GENOME REANNOTATION</scope>
    <source>
        <strain>cv. Columbia</strain>
    </source>
</reference>
<reference key="4">
    <citation type="submission" date="2003-12" db="EMBL/GenBank/DDBJ databases">
        <title>Arabidopsis ORF clones.</title>
        <authorList>
            <person name="Kim C.J."/>
            <person name="Chen H."/>
            <person name="Cheuk R."/>
            <person name="Shinn P."/>
            <person name="Carninci P."/>
            <person name="Hayashizaki Y."/>
            <person name="Ishida J."/>
            <person name="Kamiya A."/>
            <person name="Kawai J."/>
            <person name="Narusaka M."/>
            <person name="Sakurai T."/>
            <person name="Satou M."/>
            <person name="Seki M."/>
            <person name="Shinozaki K."/>
            <person name="Ecker J.R."/>
        </authorList>
    </citation>
    <scope>NUCLEOTIDE SEQUENCE [LARGE SCALE MRNA]</scope>
    <source>
        <strain>cv. Columbia</strain>
    </source>
</reference>
<reference key="5">
    <citation type="submission" date="2006-07" db="EMBL/GenBank/DDBJ databases">
        <title>Large-scale analysis of RIKEN Arabidopsis full-length (RAFL) cDNAs.</title>
        <authorList>
            <person name="Totoki Y."/>
            <person name="Seki M."/>
            <person name="Ishida J."/>
            <person name="Nakajima M."/>
            <person name="Enju A."/>
            <person name="Kamiya A."/>
            <person name="Narusaka M."/>
            <person name="Shin-i T."/>
            <person name="Nakagawa M."/>
            <person name="Sakamoto N."/>
            <person name="Oishi K."/>
            <person name="Kohara Y."/>
            <person name="Kobayashi M."/>
            <person name="Toyoda A."/>
            <person name="Sakaki Y."/>
            <person name="Sakurai T."/>
            <person name="Iida K."/>
            <person name="Akiyama K."/>
            <person name="Satou M."/>
            <person name="Toyoda T."/>
            <person name="Konagaya A."/>
            <person name="Carninci P."/>
            <person name="Kawai J."/>
            <person name="Hayashizaki Y."/>
            <person name="Shinozaki K."/>
        </authorList>
    </citation>
    <scope>NUCLEOTIDE SEQUENCE [LARGE SCALE MRNA]</scope>
    <source>
        <strain>cv. Columbia</strain>
    </source>
</reference>
<reference key="6">
    <citation type="journal article" date="2005" name="J. Biol. Chem.">
        <title>Cullins 3a and 3b assemble with members of the broad complex/tramtrack/bric-a-brac (BTB) protein family to form essential ubiquitin-protein ligases (E3s) in Arabidopsis.</title>
        <authorList>
            <person name="Gingerich D.J."/>
            <person name="Gagne J.M."/>
            <person name="Salter D.W."/>
            <person name="Hellmann H."/>
            <person name="Estelle M."/>
            <person name="Ma L."/>
            <person name="Vierstra R.D."/>
        </authorList>
    </citation>
    <scope>DOMAIN BTB</scope>
</reference>
<reference key="7">
    <citation type="journal article" date="2005" name="Plant Cell">
        <title>Arabidopsis has two redundant Cullin3 proteins that are essential for embryo development and that interact with RBX1 and BTB proteins to form multisubunit E3 ubiquitin ligase complexes in vivo.</title>
        <authorList>
            <person name="Figueroa P."/>
            <person name="Gusmaroli G."/>
            <person name="Serino G."/>
            <person name="Habashi J."/>
            <person name="Ma L."/>
            <person name="Shen Y."/>
            <person name="Feng S."/>
            <person name="Bostick M."/>
            <person name="Callis J."/>
            <person name="Hellmann H."/>
            <person name="Deng X.W."/>
        </authorList>
    </citation>
    <scope>INTERACTION WITH CUL3A</scope>
</reference>
<reference key="8">
    <citation type="journal article" date="2009" name="Plant J.">
        <title>BTB and TAZ DOMAIN scaffold proteins perform a crucial function in Arabidopsis development.</title>
        <authorList>
            <person name="Robert H.S."/>
            <person name="Quint A."/>
            <person name="Brand D."/>
            <person name="Vivian-Smith A."/>
            <person name="Offringa R."/>
        </authorList>
    </citation>
    <scope>FUNCTION</scope>
    <scope>SUBCELLULAR LOCATION</scope>
    <scope>INDUCTION BY AUXIN</scope>
    <scope>TISSUE SPECIFICITY</scope>
</reference>
<protein>
    <recommendedName>
        <fullName>BTB/POZ and TAZ domain-containing protein 1</fullName>
    </recommendedName>
    <alternativeName>
        <fullName>BTB and TAZ domain protein 1</fullName>
    </alternativeName>
</protein>
<comment type="function">
    <text evidence="6">May act as a substrate-specific adapter of an E3 ubiquitin-protein ligase complex (CUL3-RBX1-BTB) which mediates the ubiquitination and subsequent proteasomal degradation of target proteins. Also targeted for degradation by the 26S proteasome pathway. May be involved in gametophyte development.</text>
</comment>
<comment type="pathway">
    <text>Protein modification; protein ubiquitination.</text>
</comment>
<comment type="subunit">
    <text evidence="3 5">Interacts with CUL3A. Interacts with GTE9/BET9 and GTE11/BET10 through the BTB domain.</text>
</comment>
<comment type="interaction">
    <interactant intactId="EBI-541001">
        <id>Q9FMK7</id>
    </interactant>
    <interactant intactId="EBI-1394728">
        <id>Q93ZB7</id>
        <label>GTE11</label>
    </interactant>
    <organismsDiffer>false</organismsDiffer>
    <experiments>3</experiments>
</comment>
<comment type="interaction">
    <interactant intactId="EBI-541001">
        <id>Q9FMK7</id>
    </interactant>
    <interactant intactId="EBI-1394541">
        <id>P13868</id>
        <label>PCM1</label>
    </interactant>
    <organismsDiffer>true</organismsDiffer>
    <experiments>2</experiments>
</comment>
<comment type="subcellular location">
    <subcellularLocation>
        <location>Nucleus</location>
    </subcellularLocation>
    <subcellularLocation>
        <location>Cytoplasm</location>
    </subcellularLocation>
</comment>
<comment type="tissue specificity">
    <text evidence="3 6">Preferentially expressed in young leaves, roots and stems.</text>
</comment>
<comment type="induction">
    <text evidence="3 6">Up-regulated by auxin (IAA). Down-regulated by salicylic acid (SA) and hydrogen peroxide.</text>
</comment>
<comment type="domain">
    <text evidence="4">The BTB/POZ domain mediates the interaction with some component of ubiquitin ligase complexes.</text>
</comment>
<keyword id="KW-0963">Cytoplasm</keyword>
<keyword id="KW-0479">Metal-binding</keyword>
<keyword id="KW-0539">Nucleus</keyword>
<keyword id="KW-1185">Reference proteome</keyword>
<keyword id="KW-0833">Ubl conjugation pathway</keyword>
<keyword id="KW-0862">Zinc</keyword>
<keyword id="KW-0863">Zinc-finger</keyword>
<evidence type="ECO:0000255" key="1"/>
<evidence type="ECO:0000255" key="2">
    <source>
        <dbReference type="PROSITE-ProRule" id="PRU00037"/>
    </source>
</evidence>
<evidence type="ECO:0000269" key="3">
    <source>
    </source>
</evidence>
<evidence type="ECO:0000269" key="4">
    <source>
    </source>
</evidence>
<evidence type="ECO:0000269" key="5">
    <source>
    </source>
</evidence>
<evidence type="ECO:0000269" key="6">
    <source>
    </source>
</evidence>
<proteinExistence type="evidence at protein level"/>
<sequence>MAITATQNDGVSLNANKISYDLVETDVEIITSGRRSIPAHSGILASVSPVLTNIIEKPRKIHGGSSKKVIKILGVPCDAVSVFVRFLYSPSVTENEMEKYGIHLLALSHVYMVTQLKQRCTKGVGERVTAENVVDILQLARLCDAPDLCLKCMRFIHYKFKTVEQTEGWKFLQEHDPFLELDILQFIDDAESRKKRRRRHRREQNLYLQLSEAMECIEHICTEGCTLVGPSSNLDNKSTCQAKPGPCSAFSTCYGLQLLIRHFAVCKKRVDGKGCVRCKRMIQLLRLHSSICDQSESCRVPLCRQYKNRGEKDKKMVEDTKWKVLVRRVASAKAMSSLSQSKKKKSEVLFKEEAEDLIRIRNKLM</sequence>
<organism>
    <name type="scientific">Arabidopsis thaliana</name>
    <name type="common">Mouse-ear cress</name>
    <dbReference type="NCBI Taxonomy" id="3702"/>
    <lineage>
        <taxon>Eukaryota</taxon>
        <taxon>Viridiplantae</taxon>
        <taxon>Streptophyta</taxon>
        <taxon>Embryophyta</taxon>
        <taxon>Tracheophyta</taxon>
        <taxon>Spermatophyta</taxon>
        <taxon>Magnoliopsida</taxon>
        <taxon>eudicotyledons</taxon>
        <taxon>Gunneridae</taxon>
        <taxon>Pentapetalae</taxon>
        <taxon>rosids</taxon>
        <taxon>malvids</taxon>
        <taxon>Brassicales</taxon>
        <taxon>Brassicaceae</taxon>
        <taxon>Camelineae</taxon>
        <taxon>Arabidopsis</taxon>
    </lineage>
</organism>
<feature type="chain" id="PRO_0000406142" description="BTB/POZ and TAZ domain-containing protein 1">
    <location>
        <begin position="1"/>
        <end position="365"/>
    </location>
</feature>
<feature type="domain" description="BTB" evidence="2">
    <location>
        <begin position="25"/>
        <end position="96"/>
    </location>
</feature>
<feature type="zinc finger region" description="TAZ-type">
    <location>
        <begin position="205"/>
        <end position="304"/>
    </location>
</feature>
<feature type="region of interest" description="CaM-binding">
    <location>
        <begin position="315"/>
        <end position="338"/>
    </location>
</feature>
<feature type="short sequence motif" description="Nuclear localization signal" evidence="1">
    <location>
        <begin position="193"/>
        <end position="202"/>
    </location>
</feature>
<accession>Q9FMK7</accession>
<dbReference type="EMBL" id="AY316674">
    <property type="protein sequence ID" value="AAQ87004.1"/>
    <property type="molecule type" value="mRNA"/>
</dbReference>
<dbReference type="EMBL" id="AB008265">
    <property type="protein sequence ID" value="BAB10558.1"/>
    <property type="molecule type" value="Genomic_DNA"/>
</dbReference>
<dbReference type="EMBL" id="CP002688">
    <property type="protein sequence ID" value="AED97712.1"/>
    <property type="molecule type" value="Genomic_DNA"/>
</dbReference>
<dbReference type="EMBL" id="BT010872">
    <property type="protein sequence ID" value="AAR24650.1"/>
    <property type="molecule type" value="mRNA"/>
</dbReference>
<dbReference type="EMBL" id="AK227278">
    <property type="protein sequence ID" value="BAE99302.1"/>
    <property type="molecule type" value="mRNA"/>
</dbReference>
<dbReference type="RefSeq" id="NP_201121.1">
    <property type="nucleotide sequence ID" value="NM_125711.5"/>
</dbReference>
<dbReference type="SMR" id="Q9FMK7"/>
<dbReference type="BioGRID" id="21680">
    <property type="interactions" value="6"/>
</dbReference>
<dbReference type="FunCoup" id="Q9FMK7">
    <property type="interactions" value="7"/>
</dbReference>
<dbReference type="IntAct" id="Q9FMK7">
    <property type="interactions" value="8"/>
</dbReference>
<dbReference type="STRING" id="3702.Q9FMK7"/>
<dbReference type="PaxDb" id="3702-AT5G63160.1"/>
<dbReference type="ProteomicsDB" id="222821"/>
<dbReference type="EnsemblPlants" id="AT5G63160.1">
    <property type="protein sequence ID" value="AT5G63160.1"/>
    <property type="gene ID" value="AT5G63160"/>
</dbReference>
<dbReference type="GeneID" id="836437"/>
<dbReference type="Gramene" id="AT5G63160.1">
    <property type="protein sequence ID" value="AT5G63160.1"/>
    <property type="gene ID" value="AT5G63160"/>
</dbReference>
<dbReference type="KEGG" id="ath:AT5G63160"/>
<dbReference type="Araport" id="AT5G63160"/>
<dbReference type="TAIR" id="AT5G63160">
    <property type="gene designation" value="BT1"/>
</dbReference>
<dbReference type="eggNOG" id="KOG1778">
    <property type="taxonomic scope" value="Eukaryota"/>
</dbReference>
<dbReference type="HOGENOM" id="CLU_037906_0_0_1"/>
<dbReference type="InParanoid" id="Q9FMK7"/>
<dbReference type="OMA" id="KRRQMSC"/>
<dbReference type="PhylomeDB" id="Q9FMK7"/>
<dbReference type="UniPathway" id="UPA00143"/>
<dbReference type="PRO" id="PR:Q9FMK7"/>
<dbReference type="Proteomes" id="UP000006548">
    <property type="component" value="Chromosome 5"/>
</dbReference>
<dbReference type="ExpressionAtlas" id="Q9FMK7">
    <property type="expression patterns" value="baseline and differential"/>
</dbReference>
<dbReference type="GO" id="GO:0005737">
    <property type="term" value="C:cytoplasm"/>
    <property type="evidence" value="ECO:0000314"/>
    <property type="project" value="TAIR"/>
</dbReference>
<dbReference type="GO" id="GO:0005634">
    <property type="term" value="C:nucleus"/>
    <property type="evidence" value="ECO:0000314"/>
    <property type="project" value="UniProtKB"/>
</dbReference>
<dbReference type="GO" id="GO:0005516">
    <property type="term" value="F:calmodulin binding"/>
    <property type="evidence" value="ECO:0000314"/>
    <property type="project" value="UniProtKB"/>
</dbReference>
<dbReference type="GO" id="GO:0008270">
    <property type="term" value="F:zinc ion binding"/>
    <property type="evidence" value="ECO:0007669"/>
    <property type="project" value="UniProtKB-KW"/>
</dbReference>
<dbReference type="GO" id="GO:0009553">
    <property type="term" value="P:embryo sac development"/>
    <property type="evidence" value="ECO:0000316"/>
    <property type="project" value="TAIR"/>
</dbReference>
<dbReference type="GO" id="GO:0009555">
    <property type="term" value="P:pollen development"/>
    <property type="evidence" value="ECO:0000316"/>
    <property type="project" value="TAIR"/>
</dbReference>
<dbReference type="GO" id="GO:0016567">
    <property type="term" value="P:protein ubiquitination"/>
    <property type="evidence" value="ECO:0007669"/>
    <property type="project" value="UniProtKB-UniPathway"/>
</dbReference>
<dbReference type="GO" id="GO:0006355">
    <property type="term" value="P:regulation of DNA-templated transcription"/>
    <property type="evidence" value="ECO:0000304"/>
    <property type="project" value="TAIR"/>
</dbReference>
<dbReference type="GO" id="GO:0009733">
    <property type="term" value="P:response to auxin"/>
    <property type="evidence" value="ECO:0000270"/>
    <property type="project" value="TAIR"/>
</dbReference>
<dbReference type="GO" id="GO:0042542">
    <property type="term" value="P:response to hydrogen peroxide"/>
    <property type="evidence" value="ECO:0000270"/>
    <property type="project" value="UniProtKB"/>
</dbReference>
<dbReference type="GO" id="GO:0009751">
    <property type="term" value="P:response to salicylic acid"/>
    <property type="evidence" value="ECO:0000270"/>
    <property type="project" value="UniProtKB"/>
</dbReference>
<dbReference type="CDD" id="cd14733">
    <property type="entry name" value="BACK"/>
    <property type="match status" value="1"/>
</dbReference>
<dbReference type="CDD" id="cd18313">
    <property type="entry name" value="BTB_POZ_BT"/>
    <property type="match status" value="1"/>
</dbReference>
<dbReference type="FunFam" id="1.20.1020.10:FF:000007">
    <property type="entry name" value="BTB/POZ and TAZ domain-containing protein 2"/>
    <property type="match status" value="1"/>
</dbReference>
<dbReference type="FunFam" id="1.25.40.420:FF:000012">
    <property type="entry name" value="BTB/POZ and TAZ domain-containing protein 2"/>
    <property type="match status" value="1"/>
</dbReference>
<dbReference type="FunFam" id="3.30.710.10:FF:000193">
    <property type="entry name" value="BTB/POZ and TAZ domain-containing protein 2"/>
    <property type="match status" value="1"/>
</dbReference>
<dbReference type="Gene3D" id="1.25.40.420">
    <property type="match status" value="1"/>
</dbReference>
<dbReference type="Gene3D" id="3.30.710.10">
    <property type="entry name" value="Potassium Channel Kv1.1, Chain A"/>
    <property type="match status" value="1"/>
</dbReference>
<dbReference type="Gene3D" id="1.20.1020.10">
    <property type="entry name" value="TAZ domain"/>
    <property type="match status" value="1"/>
</dbReference>
<dbReference type="InterPro" id="IPR044513">
    <property type="entry name" value="BT1/2/3/4/5"/>
</dbReference>
<dbReference type="InterPro" id="IPR000210">
    <property type="entry name" value="BTB/POZ_dom"/>
</dbReference>
<dbReference type="InterPro" id="IPR011333">
    <property type="entry name" value="SKP1/BTB/POZ_sf"/>
</dbReference>
<dbReference type="InterPro" id="IPR035898">
    <property type="entry name" value="TAZ_dom_sf"/>
</dbReference>
<dbReference type="InterPro" id="IPR000197">
    <property type="entry name" value="Znf_TAZ"/>
</dbReference>
<dbReference type="PANTHER" id="PTHR46287">
    <property type="entry name" value="BTB/POZ AND TAZ DOMAIN-CONTAINING PROTEIN 3-RELATED"/>
    <property type="match status" value="1"/>
</dbReference>
<dbReference type="PANTHER" id="PTHR46287:SF7">
    <property type="entry name" value="BTB_POZ AND TAZ DOMAIN-CONTAINING PROTEIN 1"/>
    <property type="match status" value="1"/>
</dbReference>
<dbReference type="Pfam" id="PF00651">
    <property type="entry name" value="BTB"/>
    <property type="match status" value="1"/>
</dbReference>
<dbReference type="Pfam" id="PF02135">
    <property type="entry name" value="zf-TAZ"/>
    <property type="match status" value="1"/>
</dbReference>
<dbReference type="SMART" id="SM00225">
    <property type="entry name" value="BTB"/>
    <property type="match status" value="1"/>
</dbReference>
<dbReference type="SMART" id="SM00551">
    <property type="entry name" value="ZnF_TAZ"/>
    <property type="match status" value="1"/>
</dbReference>
<dbReference type="SUPFAM" id="SSF54695">
    <property type="entry name" value="POZ domain"/>
    <property type="match status" value="1"/>
</dbReference>
<dbReference type="SUPFAM" id="SSF57933">
    <property type="entry name" value="TAZ domain"/>
    <property type="match status" value="1"/>
</dbReference>
<dbReference type="PROSITE" id="PS50097">
    <property type="entry name" value="BTB"/>
    <property type="match status" value="1"/>
</dbReference>
<gene>
    <name type="primary">BT1</name>
    <name type="ordered locus">At5g63160</name>
    <name type="ORF">MDC12.13</name>
</gene>